<protein>
    <recommendedName>
        <fullName evidence="1">Pantothenate synthetase</fullName>
        <shortName evidence="1">PS</shortName>
        <ecNumber evidence="1">6.3.2.1</ecNumber>
    </recommendedName>
    <alternativeName>
        <fullName evidence="1">Pantoate--beta-alanine ligase</fullName>
    </alternativeName>
    <alternativeName>
        <fullName evidence="1">Pantoate-activating enzyme</fullName>
    </alternativeName>
</protein>
<organism>
    <name type="scientific">Francisella philomiragia subsp. philomiragia (strain ATCC 25017 / CCUG 19701 / FSC 153 / O#319-036)</name>
    <dbReference type="NCBI Taxonomy" id="484022"/>
    <lineage>
        <taxon>Bacteria</taxon>
        <taxon>Pseudomonadati</taxon>
        <taxon>Pseudomonadota</taxon>
        <taxon>Gammaproteobacteria</taxon>
        <taxon>Thiotrichales</taxon>
        <taxon>Francisellaceae</taxon>
        <taxon>Francisella</taxon>
    </lineage>
</organism>
<gene>
    <name evidence="1" type="primary">panC</name>
    <name type="ordered locus">Fphi_1335</name>
</gene>
<dbReference type="EC" id="6.3.2.1" evidence="1"/>
<dbReference type="EMBL" id="CP000937">
    <property type="protein sequence ID" value="ABZ87560.1"/>
    <property type="molecule type" value="Genomic_DNA"/>
</dbReference>
<dbReference type="SMR" id="B0TXZ9"/>
<dbReference type="KEGG" id="fph:Fphi_1335"/>
<dbReference type="eggNOG" id="COG0414">
    <property type="taxonomic scope" value="Bacteria"/>
</dbReference>
<dbReference type="HOGENOM" id="CLU_047148_0_0_6"/>
<dbReference type="UniPathway" id="UPA00028">
    <property type="reaction ID" value="UER00005"/>
</dbReference>
<dbReference type="GO" id="GO:0005737">
    <property type="term" value="C:cytoplasm"/>
    <property type="evidence" value="ECO:0007669"/>
    <property type="project" value="UniProtKB-SubCell"/>
</dbReference>
<dbReference type="GO" id="GO:0005524">
    <property type="term" value="F:ATP binding"/>
    <property type="evidence" value="ECO:0007669"/>
    <property type="project" value="UniProtKB-KW"/>
</dbReference>
<dbReference type="GO" id="GO:0004592">
    <property type="term" value="F:pantoate-beta-alanine ligase activity"/>
    <property type="evidence" value="ECO:0007669"/>
    <property type="project" value="UniProtKB-UniRule"/>
</dbReference>
<dbReference type="GO" id="GO:0015940">
    <property type="term" value="P:pantothenate biosynthetic process"/>
    <property type="evidence" value="ECO:0007669"/>
    <property type="project" value="UniProtKB-UniRule"/>
</dbReference>
<dbReference type="Gene3D" id="3.40.50.620">
    <property type="entry name" value="HUPs"/>
    <property type="match status" value="1"/>
</dbReference>
<dbReference type="Gene3D" id="3.30.1300.10">
    <property type="entry name" value="Pantoate-beta-alanine ligase, C-terminal domain"/>
    <property type="match status" value="1"/>
</dbReference>
<dbReference type="HAMAP" id="MF_00158">
    <property type="entry name" value="PanC"/>
    <property type="match status" value="1"/>
</dbReference>
<dbReference type="InterPro" id="IPR004821">
    <property type="entry name" value="Cyt_trans-like"/>
</dbReference>
<dbReference type="InterPro" id="IPR003721">
    <property type="entry name" value="Pantoate_ligase"/>
</dbReference>
<dbReference type="InterPro" id="IPR042176">
    <property type="entry name" value="Pantoate_ligase_C"/>
</dbReference>
<dbReference type="InterPro" id="IPR014729">
    <property type="entry name" value="Rossmann-like_a/b/a_fold"/>
</dbReference>
<dbReference type="NCBIfam" id="TIGR00125">
    <property type="entry name" value="cyt_tran_rel"/>
    <property type="match status" value="1"/>
</dbReference>
<dbReference type="NCBIfam" id="TIGR00018">
    <property type="entry name" value="panC"/>
    <property type="match status" value="1"/>
</dbReference>
<dbReference type="PANTHER" id="PTHR21299">
    <property type="entry name" value="CYTIDYLATE KINASE/PANTOATE-BETA-ALANINE LIGASE"/>
    <property type="match status" value="1"/>
</dbReference>
<dbReference type="PANTHER" id="PTHR21299:SF1">
    <property type="entry name" value="PANTOATE--BETA-ALANINE LIGASE"/>
    <property type="match status" value="1"/>
</dbReference>
<dbReference type="Pfam" id="PF02569">
    <property type="entry name" value="Pantoate_ligase"/>
    <property type="match status" value="1"/>
</dbReference>
<dbReference type="SUPFAM" id="SSF52374">
    <property type="entry name" value="Nucleotidylyl transferase"/>
    <property type="match status" value="1"/>
</dbReference>
<accession>B0TXZ9</accession>
<keyword id="KW-0067">ATP-binding</keyword>
<keyword id="KW-0963">Cytoplasm</keyword>
<keyword id="KW-0436">Ligase</keyword>
<keyword id="KW-0547">Nucleotide-binding</keyword>
<keyword id="KW-0566">Pantothenate biosynthesis</keyword>
<sequence length="261" mass="29832">MIIAKNIEQFNLLRESFTKDRKIGFVPTMGALHNGHICLIKKAKSENDVTIVSIFVNPTQFNNPNDYQTYPNQLQQDIQILESLDVDILFNPSEKDIYPDGNLLRIQPELEIANILEGKARPGHFSGMLTVVLKLLQITKPDNLYLGEKDYQQVMLIKQLVKDFFIKTKVIVCSTQRQATGLPLSSRNKNLTSADIEIANKVYEILRQDNFLDLEELTNKINSTGARTEYIQKINNRIFLALYISKVRLIDNFLKETGPSC</sequence>
<proteinExistence type="inferred from homology"/>
<name>PANC_FRAP2</name>
<feature type="chain" id="PRO_1000076856" description="Pantothenate synthetase">
    <location>
        <begin position="1"/>
        <end position="261"/>
    </location>
</feature>
<feature type="active site" description="Proton donor" evidence="1">
    <location>
        <position position="36"/>
    </location>
</feature>
<feature type="binding site" evidence="1">
    <location>
        <begin position="29"/>
        <end position="36"/>
    </location>
    <ligand>
        <name>ATP</name>
        <dbReference type="ChEBI" id="CHEBI:30616"/>
    </ligand>
</feature>
<feature type="binding site" evidence="1">
    <location>
        <position position="60"/>
    </location>
    <ligand>
        <name>(R)-pantoate</name>
        <dbReference type="ChEBI" id="CHEBI:15980"/>
    </ligand>
</feature>
<feature type="binding site" evidence="1">
    <location>
        <position position="60"/>
    </location>
    <ligand>
        <name>beta-alanine</name>
        <dbReference type="ChEBI" id="CHEBI:57966"/>
    </ligand>
</feature>
<feature type="binding site" evidence="1">
    <location>
        <begin position="147"/>
        <end position="150"/>
    </location>
    <ligand>
        <name>ATP</name>
        <dbReference type="ChEBI" id="CHEBI:30616"/>
    </ligand>
</feature>
<feature type="binding site" evidence="1">
    <location>
        <position position="153"/>
    </location>
    <ligand>
        <name>(R)-pantoate</name>
        <dbReference type="ChEBI" id="CHEBI:15980"/>
    </ligand>
</feature>
<feature type="binding site" evidence="1">
    <location>
        <begin position="184"/>
        <end position="187"/>
    </location>
    <ligand>
        <name>ATP</name>
        <dbReference type="ChEBI" id="CHEBI:30616"/>
    </ligand>
</feature>
<reference key="1">
    <citation type="submission" date="2007-12" db="EMBL/GenBank/DDBJ databases">
        <title>Complete sequence of chromosome of Francisella philomiragia subsp. philomiragia ATCC 25017.</title>
        <authorList>
            <consortium name="US DOE Joint Genome Institute"/>
            <person name="Copeland A."/>
            <person name="Lucas S."/>
            <person name="Lapidus A."/>
            <person name="Barry K."/>
            <person name="Detter J.C."/>
            <person name="Glavina del Rio T."/>
            <person name="Hammon N."/>
            <person name="Israni S."/>
            <person name="Dalin E."/>
            <person name="Tice H."/>
            <person name="Pitluck S."/>
            <person name="Chain P."/>
            <person name="Malfatti S."/>
            <person name="Shin M."/>
            <person name="Vergez L."/>
            <person name="Schmutz J."/>
            <person name="Larimer F."/>
            <person name="Land M."/>
            <person name="Hauser L."/>
            <person name="Richardson P."/>
        </authorList>
    </citation>
    <scope>NUCLEOTIDE SEQUENCE [LARGE SCALE GENOMIC DNA]</scope>
    <source>
        <strain>ATCC 25017 / CCUG 19701 / FSC 153 / O#319-036</strain>
    </source>
</reference>
<evidence type="ECO:0000255" key="1">
    <source>
        <dbReference type="HAMAP-Rule" id="MF_00158"/>
    </source>
</evidence>
<comment type="function">
    <text evidence="1">Catalyzes the condensation of pantoate with beta-alanine in an ATP-dependent reaction via a pantoyl-adenylate intermediate.</text>
</comment>
<comment type="catalytic activity">
    <reaction evidence="1">
        <text>(R)-pantoate + beta-alanine + ATP = (R)-pantothenate + AMP + diphosphate + H(+)</text>
        <dbReference type="Rhea" id="RHEA:10912"/>
        <dbReference type="ChEBI" id="CHEBI:15378"/>
        <dbReference type="ChEBI" id="CHEBI:15980"/>
        <dbReference type="ChEBI" id="CHEBI:29032"/>
        <dbReference type="ChEBI" id="CHEBI:30616"/>
        <dbReference type="ChEBI" id="CHEBI:33019"/>
        <dbReference type="ChEBI" id="CHEBI:57966"/>
        <dbReference type="ChEBI" id="CHEBI:456215"/>
        <dbReference type="EC" id="6.3.2.1"/>
    </reaction>
</comment>
<comment type="pathway">
    <text evidence="1">Cofactor biosynthesis; (R)-pantothenate biosynthesis; (R)-pantothenate from (R)-pantoate and beta-alanine: step 1/1.</text>
</comment>
<comment type="subunit">
    <text evidence="1">Homodimer.</text>
</comment>
<comment type="subcellular location">
    <subcellularLocation>
        <location evidence="1">Cytoplasm</location>
    </subcellularLocation>
</comment>
<comment type="miscellaneous">
    <text evidence="1">The reaction proceeds by a bi uni uni bi ping pong mechanism.</text>
</comment>
<comment type="similarity">
    <text evidence="1">Belongs to the pantothenate synthetase family.</text>
</comment>